<organism>
    <name type="scientific">Cupriavidus pinatubonensis (strain JMP 134 / LMG 1197)</name>
    <name type="common">Cupriavidus necator (strain JMP 134)</name>
    <dbReference type="NCBI Taxonomy" id="264198"/>
    <lineage>
        <taxon>Bacteria</taxon>
        <taxon>Pseudomonadati</taxon>
        <taxon>Pseudomonadota</taxon>
        <taxon>Betaproteobacteria</taxon>
        <taxon>Burkholderiales</taxon>
        <taxon>Burkholderiaceae</taxon>
        <taxon>Cupriavidus</taxon>
    </lineage>
</organism>
<dbReference type="EMBL" id="CP000090">
    <property type="protein sequence ID" value="AAZ62094.1"/>
    <property type="molecule type" value="Genomic_DNA"/>
</dbReference>
<dbReference type="SMR" id="Q46XN9"/>
<dbReference type="STRING" id="264198.Reut_A2733"/>
<dbReference type="KEGG" id="reu:Reut_A2733"/>
<dbReference type="eggNOG" id="COG0227">
    <property type="taxonomic scope" value="Bacteria"/>
</dbReference>
<dbReference type="HOGENOM" id="CLU_064548_3_1_4"/>
<dbReference type="OrthoDB" id="9805609at2"/>
<dbReference type="GO" id="GO:0022625">
    <property type="term" value="C:cytosolic large ribosomal subunit"/>
    <property type="evidence" value="ECO:0007669"/>
    <property type="project" value="TreeGrafter"/>
</dbReference>
<dbReference type="GO" id="GO:0003735">
    <property type="term" value="F:structural constituent of ribosome"/>
    <property type="evidence" value="ECO:0007669"/>
    <property type="project" value="InterPro"/>
</dbReference>
<dbReference type="GO" id="GO:0006412">
    <property type="term" value="P:translation"/>
    <property type="evidence" value="ECO:0007669"/>
    <property type="project" value="UniProtKB-UniRule"/>
</dbReference>
<dbReference type="FunFam" id="2.30.170.40:FF:000001">
    <property type="entry name" value="50S ribosomal protein L28"/>
    <property type="match status" value="1"/>
</dbReference>
<dbReference type="Gene3D" id="2.30.170.40">
    <property type="entry name" value="Ribosomal protein L28/L24"/>
    <property type="match status" value="1"/>
</dbReference>
<dbReference type="HAMAP" id="MF_00373">
    <property type="entry name" value="Ribosomal_bL28"/>
    <property type="match status" value="1"/>
</dbReference>
<dbReference type="InterPro" id="IPR026569">
    <property type="entry name" value="Ribosomal_bL28"/>
</dbReference>
<dbReference type="InterPro" id="IPR034704">
    <property type="entry name" value="Ribosomal_bL28/bL31-like_sf"/>
</dbReference>
<dbReference type="InterPro" id="IPR001383">
    <property type="entry name" value="Ribosomal_bL28_bact-type"/>
</dbReference>
<dbReference type="InterPro" id="IPR037147">
    <property type="entry name" value="Ribosomal_bL28_sf"/>
</dbReference>
<dbReference type="NCBIfam" id="TIGR00009">
    <property type="entry name" value="L28"/>
    <property type="match status" value="1"/>
</dbReference>
<dbReference type="PANTHER" id="PTHR13528">
    <property type="entry name" value="39S RIBOSOMAL PROTEIN L28, MITOCHONDRIAL"/>
    <property type="match status" value="1"/>
</dbReference>
<dbReference type="PANTHER" id="PTHR13528:SF2">
    <property type="entry name" value="LARGE RIBOSOMAL SUBUNIT PROTEIN BL28M"/>
    <property type="match status" value="1"/>
</dbReference>
<dbReference type="Pfam" id="PF00830">
    <property type="entry name" value="Ribosomal_L28"/>
    <property type="match status" value="1"/>
</dbReference>
<dbReference type="SUPFAM" id="SSF143800">
    <property type="entry name" value="L28p-like"/>
    <property type="match status" value="1"/>
</dbReference>
<proteinExistence type="inferred from homology"/>
<protein>
    <recommendedName>
        <fullName evidence="1">Large ribosomal subunit protein bL28</fullName>
    </recommendedName>
    <alternativeName>
        <fullName evidence="2">50S ribosomal protein L28</fullName>
    </alternativeName>
</protein>
<accession>Q46XN9</accession>
<comment type="similarity">
    <text evidence="1">Belongs to the bacterial ribosomal protein bL28 family.</text>
</comment>
<feature type="chain" id="PRO_1000007324" description="Large ribosomal subunit protein bL28">
    <location>
        <begin position="1"/>
        <end position="77"/>
    </location>
</feature>
<evidence type="ECO:0000255" key="1">
    <source>
        <dbReference type="HAMAP-Rule" id="MF_00373"/>
    </source>
</evidence>
<evidence type="ECO:0000305" key="2"/>
<gene>
    <name evidence="1" type="primary">rpmB</name>
    <name type="ordered locus">Reut_A2733</name>
</gene>
<reference key="1">
    <citation type="journal article" date="2010" name="PLoS ONE">
        <title>The complete multipartite genome sequence of Cupriavidus necator JMP134, a versatile pollutant degrader.</title>
        <authorList>
            <person name="Lykidis A."/>
            <person name="Perez-Pantoja D."/>
            <person name="Ledger T."/>
            <person name="Mavromatis K."/>
            <person name="Anderson I.J."/>
            <person name="Ivanova N.N."/>
            <person name="Hooper S.D."/>
            <person name="Lapidus A."/>
            <person name="Lucas S."/>
            <person name="Gonzalez B."/>
            <person name="Kyrpides N.C."/>
        </authorList>
    </citation>
    <scope>NUCLEOTIDE SEQUENCE [LARGE SCALE GENOMIC DNA]</scope>
    <source>
        <strain>JMP134 / LMG 1197</strain>
    </source>
</reference>
<name>RL28_CUPPJ</name>
<sequence length="77" mass="8707">MARVCQVTGKAPMVGNNVSHANNKTKRRFLPNLQNRRFFVESENRWVSLRVSNAGLRLIDKKGIDSVLADLRARGEV</sequence>
<keyword id="KW-0687">Ribonucleoprotein</keyword>
<keyword id="KW-0689">Ribosomal protein</keyword>